<comment type="function">
    <text evidence="1">Catalyzes the formation of S-adenosylmethionine (AdoMet) from methionine and ATP. The overall synthetic reaction is composed of two sequential steps, AdoMet formation and the subsequent tripolyphosphate hydrolysis which occurs prior to release of AdoMet from the enzyme.</text>
</comment>
<comment type="catalytic activity">
    <reaction evidence="1">
        <text>L-methionine + ATP + H2O = S-adenosyl-L-methionine + phosphate + diphosphate</text>
        <dbReference type="Rhea" id="RHEA:21080"/>
        <dbReference type="ChEBI" id="CHEBI:15377"/>
        <dbReference type="ChEBI" id="CHEBI:30616"/>
        <dbReference type="ChEBI" id="CHEBI:33019"/>
        <dbReference type="ChEBI" id="CHEBI:43474"/>
        <dbReference type="ChEBI" id="CHEBI:57844"/>
        <dbReference type="ChEBI" id="CHEBI:59789"/>
        <dbReference type="EC" id="2.5.1.6"/>
    </reaction>
</comment>
<comment type="cofactor">
    <cofactor evidence="1">
        <name>Mg(2+)</name>
        <dbReference type="ChEBI" id="CHEBI:18420"/>
    </cofactor>
    <text evidence="1">Binds 2 divalent ions per subunit.</text>
</comment>
<comment type="cofactor">
    <cofactor evidence="1">
        <name>K(+)</name>
        <dbReference type="ChEBI" id="CHEBI:29103"/>
    </cofactor>
    <text evidence="1">Binds 1 potassium ion per subunit.</text>
</comment>
<comment type="pathway">
    <text evidence="1">Amino-acid biosynthesis; S-adenosyl-L-methionine biosynthesis; S-adenosyl-L-methionine from L-methionine: step 1/1.</text>
</comment>
<comment type="subunit">
    <text evidence="1">Homotetramer; dimer of dimers.</text>
</comment>
<comment type="subcellular location">
    <subcellularLocation>
        <location evidence="1">Cytoplasm</location>
    </subcellularLocation>
</comment>
<comment type="similarity">
    <text evidence="1">Belongs to the AdoMet synthase family.</text>
</comment>
<sequence>MSRYLFTSESVSEGHPDKIADQISDAVLDEILKQDPKARVACETYVKTGMALVGGEITTSAWVDIENLTRQVICDIGYKHSDMGFDGHSCAVLNAIGKQSSDINQGVDRENPLDQGAGDQGIMFGYATNETEVLMPAAITYAHRLMERQAKVRKEGTLPWLRPDAKSQVTLKYEDHKIVGVDAVVLSTQHCDSISQHDLHEAVMEEIIKPVLPAEWLSKETKYFINPTGRFVIGGPMGDCGLTGRKIIVDTYGGAARHGGGAFSGKDPSKVDRSAAYAARYVAKNIVAAGLADRCEIQLSYAIGVADPTSIMVETFGTGKVANELLVALVREFFDLRPYGLIKMLDLIQPIYRETAAYGHFGREQFPWEKVDRAEELRAAAGLK</sequence>
<keyword id="KW-0067">ATP-binding</keyword>
<keyword id="KW-0963">Cytoplasm</keyword>
<keyword id="KW-0460">Magnesium</keyword>
<keyword id="KW-0479">Metal-binding</keyword>
<keyword id="KW-0547">Nucleotide-binding</keyword>
<keyword id="KW-0554">One-carbon metabolism</keyword>
<keyword id="KW-0630">Potassium</keyword>
<keyword id="KW-1185">Reference proteome</keyword>
<keyword id="KW-0808">Transferase</keyword>
<proteinExistence type="inferred from homology"/>
<gene>
    <name evidence="1" type="primary">metK</name>
    <name type="synonym">metX</name>
    <name type="ordered locus">PM1027</name>
</gene>
<organism>
    <name type="scientific">Pasteurella multocida (strain Pm70)</name>
    <dbReference type="NCBI Taxonomy" id="272843"/>
    <lineage>
        <taxon>Bacteria</taxon>
        <taxon>Pseudomonadati</taxon>
        <taxon>Pseudomonadota</taxon>
        <taxon>Gammaproteobacteria</taxon>
        <taxon>Pasteurellales</taxon>
        <taxon>Pasteurellaceae</taxon>
        <taxon>Pasteurella</taxon>
    </lineage>
</organism>
<accession>P57897</accession>
<protein>
    <recommendedName>
        <fullName evidence="1">S-adenosylmethionine synthase</fullName>
        <shortName evidence="1">AdoMet synthase</shortName>
        <ecNumber evidence="1">2.5.1.6</ecNumber>
    </recommendedName>
    <alternativeName>
        <fullName evidence="1">MAT</fullName>
    </alternativeName>
    <alternativeName>
        <fullName evidence="1">Methionine adenosyltransferase</fullName>
    </alternativeName>
</protein>
<dbReference type="EC" id="2.5.1.6" evidence="1"/>
<dbReference type="EMBL" id="AE004439">
    <property type="protein sequence ID" value="AAK03111.1"/>
    <property type="molecule type" value="Genomic_DNA"/>
</dbReference>
<dbReference type="RefSeq" id="WP_005751763.1">
    <property type="nucleotide sequence ID" value="NC_002663.1"/>
</dbReference>
<dbReference type="SMR" id="P57897"/>
<dbReference type="STRING" id="272843.PM1027"/>
<dbReference type="EnsemblBacteria" id="AAK03111">
    <property type="protein sequence ID" value="AAK03111"/>
    <property type="gene ID" value="PM1027"/>
</dbReference>
<dbReference type="KEGG" id="pmu:PM1027"/>
<dbReference type="HOGENOM" id="CLU_041802_1_1_6"/>
<dbReference type="OrthoDB" id="9801686at2"/>
<dbReference type="UniPathway" id="UPA00315">
    <property type="reaction ID" value="UER00080"/>
</dbReference>
<dbReference type="Proteomes" id="UP000000809">
    <property type="component" value="Chromosome"/>
</dbReference>
<dbReference type="GO" id="GO:0005737">
    <property type="term" value="C:cytoplasm"/>
    <property type="evidence" value="ECO:0007669"/>
    <property type="project" value="UniProtKB-SubCell"/>
</dbReference>
<dbReference type="GO" id="GO:0005524">
    <property type="term" value="F:ATP binding"/>
    <property type="evidence" value="ECO:0007669"/>
    <property type="project" value="UniProtKB-UniRule"/>
</dbReference>
<dbReference type="GO" id="GO:0000287">
    <property type="term" value="F:magnesium ion binding"/>
    <property type="evidence" value="ECO:0007669"/>
    <property type="project" value="UniProtKB-UniRule"/>
</dbReference>
<dbReference type="GO" id="GO:0004478">
    <property type="term" value="F:methionine adenosyltransferase activity"/>
    <property type="evidence" value="ECO:0007669"/>
    <property type="project" value="UniProtKB-UniRule"/>
</dbReference>
<dbReference type="GO" id="GO:0006730">
    <property type="term" value="P:one-carbon metabolic process"/>
    <property type="evidence" value="ECO:0007669"/>
    <property type="project" value="UniProtKB-KW"/>
</dbReference>
<dbReference type="GO" id="GO:0006556">
    <property type="term" value="P:S-adenosylmethionine biosynthetic process"/>
    <property type="evidence" value="ECO:0007669"/>
    <property type="project" value="UniProtKB-UniRule"/>
</dbReference>
<dbReference type="CDD" id="cd18079">
    <property type="entry name" value="S-AdoMet_synt"/>
    <property type="match status" value="1"/>
</dbReference>
<dbReference type="FunFam" id="3.30.300.10:FF:000003">
    <property type="entry name" value="S-adenosylmethionine synthase"/>
    <property type="match status" value="1"/>
</dbReference>
<dbReference type="Gene3D" id="3.30.300.10">
    <property type="match status" value="3"/>
</dbReference>
<dbReference type="HAMAP" id="MF_00086">
    <property type="entry name" value="S_AdoMet_synth1"/>
    <property type="match status" value="1"/>
</dbReference>
<dbReference type="InterPro" id="IPR022631">
    <property type="entry name" value="ADOMET_SYNTHASE_CS"/>
</dbReference>
<dbReference type="InterPro" id="IPR022630">
    <property type="entry name" value="S-AdoMet_synt_C"/>
</dbReference>
<dbReference type="InterPro" id="IPR022629">
    <property type="entry name" value="S-AdoMet_synt_central"/>
</dbReference>
<dbReference type="InterPro" id="IPR022628">
    <property type="entry name" value="S-AdoMet_synt_N"/>
</dbReference>
<dbReference type="InterPro" id="IPR002133">
    <property type="entry name" value="S-AdoMet_synthetase"/>
</dbReference>
<dbReference type="InterPro" id="IPR022636">
    <property type="entry name" value="S-AdoMet_synthetase_sfam"/>
</dbReference>
<dbReference type="NCBIfam" id="TIGR01034">
    <property type="entry name" value="metK"/>
    <property type="match status" value="1"/>
</dbReference>
<dbReference type="PANTHER" id="PTHR11964">
    <property type="entry name" value="S-ADENOSYLMETHIONINE SYNTHETASE"/>
    <property type="match status" value="1"/>
</dbReference>
<dbReference type="Pfam" id="PF02773">
    <property type="entry name" value="S-AdoMet_synt_C"/>
    <property type="match status" value="1"/>
</dbReference>
<dbReference type="Pfam" id="PF02772">
    <property type="entry name" value="S-AdoMet_synt_M"/>
    <property type="match status" value="1"/>
</dbReference>
<dbReference type="Pfam" id="PF00438">
    <property type="entry name" value="S-AdoMet_synt_N"/>
    <property type="match status" value="1"/>
</dbReference>
<dbReference type="PIRSF" id="PIRSF000497">
    <property type="entry name" value="MAT"/>
    <property type="match status" value="1"/>
</dbReference>
<dbReference type="SUPFAM" id="SSF55973">
    <property type="entry name" value="S-adenosylmethionine synthetase"/>
    <property type="match status" value="3"/>
</dbReference>
<dbReference type="PROSITE" id="PS00376">
    <property type="entry name" value="ADOMET_SYNTHASE_1"/>
    <property type="match status" value="1"/>
</dbReference>
<dbReference type="PROSITE" id="PS00377">
    <property type="entry name" value="ADOMET_SYNTHASE_2"/>
    <property type="match status" value="1"/>
</dbReference>
<evidence type="ECO:0000255" key="1">
    <source>
        <dbReference type="HAMAP-Rule" id="MF_00086"/>
    </source>
</evidence>
<feature type="chain" id="PRO_0000174564" description="S-adenosylmethionine synthase">
    <location>
        <begin position="1"/>
        <end position="384"/>
    </location>
</feature>
<feature type="region of interest" description="Flexible loop" evidence="1">
    <location>
        <begin position="99"/>
        <end position="109"/>
    </location>
</feature>
<feature type="binding site" description="in other chain" evidence="1">
    <location>
        <position position="15"/>
    </location>
    <ligand>
        <name>ATP</name>
        <dbReference type="ChEBI" id="CHEBI:30616"/>
        <note>ligand shared between two neighboring subunits</note>
    </ligand>
</feature>
<feature type="binding site" evidence="1">
    <location>
        <position position="17"/>
    </location>
    <ligand>
        <name>Mg(2+)</name>
        <dbReference type="ChEBI" id="CHEBI:18420"/>
    </ligand>
</feature>
<feature type="binding site" evidence="1">
    <location>
        <position position="43"/>
    </location>
    <ligand>
        <name>K(+)</name>
        <dbReference type="ChEBI" id="CHEBI:29103"/>
    </ligand>
</feature>
<feature type="binding site" description="in other chain" evidence="1">
    <location>
        <position position="56"/>
    </location>
    <ligand>
        <name>L-methionine</name>
        <dbReference type="ChEBI" id="CHEBI:57844"/>
        <note>ligand shared between two neighboring subunits</note>
    </ligand>
</feature>
<feature type="binding site" description="in other chain" evidence="1">
    <location>
        <position position="99"/>
    </location>
    <ligand>
        <name>L-methionine</name>
        <dbReference type="ChEBI" id="CHEBI:57844"/>
        <note>ligand shared between two neighboring subunits</note>
    </ligand>
</feature>
<feature type="binding site" description="in other chain" evidence="1">
    <location>
        <begin position="164"/>
        <end position="166"/>
    </location>
    <ligand>
        <name>ATP</name>
        <dbReference type="ChEBI" id="CHEBI:30616"/>
        <note>ligand shared between two neighboring subunits</note>
    </ligand>
</feature>
<feature type="binding site" description="in other chain" evidence="1">
    <location>
        <begin position="230"/>
        <end position="231"/>
    </location>
    <ligand>
        <name>ATP</name>
        <dbReference type="ChEBI" id="CHEBI:30616"/>
        <note>ligand shared between two neighboring subunits</note>
    </ligand>
</feature>
<feature type="binding site" evidence="1">
    <location>
        <position position="239"/>
    </location>
    <ligand>
        <name>ATP</name>
        <dbReference type="ChEBI" id="CHEBI:30616"/>
        <note>ligand shared between two neighboring subunits</note>
    </ligand>
</feature>
<feature type="binding site" evidence="1">
    <location>
        <position position="239"/>
    </location>
    <ligand>
        <name>L-methionine</name>
        <dbReference type="ChEBI" id="CHEBI:57844"/>
        <note>ligand shared between two neighboring subunits</note>
    </ligand>
</feature>
<feature type="binding site" description="in other chain" evidence="1">
    <location>
        <begin position="245"/>
        <end position="246"/>
    </location>
    <ligand>
        <name>ATP</name>
        <dbReference type="ChEBI" id="CHEBI:30616"/>
        <note>ligand shared between two neighboring subunits</note>
    </ligand>
</feature>
<feature type="binding site" evidence="1">
    <location>
        <position position="262"/>
    </location>
    <ligand>
        <name>ATP</name>
        <dbReference type="ChEBI" id="CHEBI:30616"/>
        <note>ligand shared between two neighboring subunits</note>
    </ligand>
</feature>
<feature type="binding site" evidence="1">
    <location>
        <position position="266"/>
    </location>
    <ligand>
        <name>ATP</name>
        <dbReference type="ChEBI" id="CHEBI:30616"/>
        <note>ligand shared between two neighboring subunits</note>
    </ligand>
</feature>
<feature type="binding site" description="in other chain" evidence="1">
    <location>
        <position position="270"/>
    </location>
    <ligand>
        <name>L-methionine</name>
        <dbReference type="ChEBI" id="CHEBI:57844"/>
        <note>ligand shared between two neighboring subunits</note>
    </ligand>
</feature>
<reference key="1">
    <citation type="journal article" date="2001" name="Proc. Natl. Acad. Sci. U.S.A.">
        <title>Complete genomic sequence of Pasteurella multocida Pm70.</title>
        <authorList>
            <person name="May B.J."/>
            <person name="Zhang Q."/>
            <person name="Li L.L."/>
            <person name="Paustian M.L."/>
            <person name="Whittam T.S."/>
            <person name="Kapur V."/>
        </authorList>
    </citation>
    <scope>NUCLEOTIDE SEQUENCE [LARGE SCALE GENOMIC DNA]</scope>
    <source>
        <strain>Pm70</strain>
    </source>
</reference>
<name>METK_PASMU</name>